<sequence length="131" mass="13446">MPFWFGVAVGGALGALARYGVSLLVAGRLASTAWGNFPLATLLVNVLGSFLLAFITTLALRGLVSPAWRLAVGTGFIGALTTFSTFAWESDLMVRDGEAARASLYVLGNLVLGYAAVLLGRALAARLGGGA</sequence>
<reference key="1">
    <citation type="submission" date="2006-04" db="EMBL/GenBank/DDBJ databases">
        <title>Complete sequence of plasmid 1 of Deinococcus geothermalis DSM 11300.</title>
        <authorList>
            <person name="Copeland A."/>
            <person name="Lucas S."/>
            <person name="Lapidus A."/>
            <person name="Barry K."/>
            <person name="Detter J.C."/>
            <person name="Glavina del Rio T."/>
            <person name="Hammon N."/>
            <person name="Israni S."/>
            <person name="Dalin E."/>
            <person name="Tice H."/>
            <person name="Pitluck S."/>
            <person name="Brettin T."/>
            <person name="Bruce D."/>
            <person name="Han C."/>
            <person name="Tapia R."/>
            <person name="Saunders E."/>
            <person name="Gilna P."/>
            <person name="Schmutz J."/>
            <person name="Larimer F."/>
            <person name="Land M."/>
            <person name="Hauser L."/>
            <person name="Kyrpides N."/>
            <person name="Kim E."/>
            <person name="Daly M.J."/>
            <person name="Fredrickson J.K."/>
            <person name="Makarova K.S."/>
            <person name="Gaidamakova E.K."/>
            <person name="Zhai M."/>
            <person name="Richardson P."/>
        </authorList>
    </citation>
    <scope>NUCLEOTIDE SEQUENCE [LARGE SCALE GENOMIC DNA]</scope>
    <source>
        <strain>DSM 11300 / CIP 105573 / AG-3a</strain>
    </source>
</reference>
<gene>
    <name evidence="1" type="primary">fluC2</name>
    <name evidence="1" type="synonym">crcB2</name>
    <name type="ordered locus">Dgeo_2546</name>
</gene>
<feature type="chain" id="PRO_0000252876" description="Fluoride-specific ion channel FluC 2">
    <location>
        <begin position="1"/>
        <end position="131"/>
    </location>
</feature>
<feature type="transmembrane region" description="Helical" evidence="1">
    <location>
        <begin position="5"/>
        <end position="25"/>
    </location>
</feature>
<feature type="transmembrane region" description="Helical" evidence="1">
    <location>
        <begin position="39"/>
        <end position="59"/>
    </location>
</feature>
<feature type="transmembrane region" description="Helical" evidence="1">
    <location>
        <begin position="70"/>
        <end position="90"/>
    </location>
</feature>
<feature type="transmembrane region" description="Helical" evidence="1">
    <location>
        <begin position="104"/>
        <end position="124"/>
    </location>
</feature>
<feature type="binding site" evidence="1">
    <location>
        <position position="78"/>
    </location>
    <ligand>
        <name>Na(+)</name>
        <dbReference type="ChEBI" id="CHEBI:29101"/>
        <note>structural</note>
    </ligand>
</feature>
<feature type="binding site" evidence="1">
    <location>
        <position position="81"/>
    </location>
    <ligand>
        <name>Na(+)</name>
        <dbReference type="ChEBI" id="CHEBI:29101"/>
        <note>structural</note>
    </ligand>
</feature>
<dbReference type="EMBL" id="CP000358">
    <property type="protein sequence ID" value="ABF43980.1"/>
    <property type="molecule type" value="Genomic_DNA"/>
</dbReference>
<dbReference type="RefSeq" id="WP_011526017.1">
    <property type="nucleotide sequence ID" value="NC_008010.2"/>
</dbReference>
<dbReference type="SMR" id="Q1J3F4"/>
<dbReference type="KEGG" id="dge:Dgeo_2546"/>
<dbReference type="eggNOG" id="COG0239">
    <property type="taxonomic scope" value="Bacteria"/>
</dbReference>
<dbReference type="HOGENOM" id="CLU_114342_2_3_0"/>
<dbReference type="Proteomes" id="UP000002431">
    <property type="component" value="Plasmid pDGEO01"/>
</dbReference>
<dbReference type="GO" id="GO:0005886">
    <property type="term" value="C:plasma membrane"/>
    <property type="evidence" value="ECO:0007669"/>
    <property type="project" value="UniProtKB-SubCell"/>
</dbReference>
<dbReference type="GO" id="GO:0062054">
    <property type="term" value="F:fluoride channel activity"/>
    <property type="evidence" value="ECO:0007669"/>
    <property type="project" value="UniProtKB-UniRule"/>
</dbReference>
<dbReference type="GO" id="GO:0046872">
    <property type="term" value="F:metal ion binding"/>
    <property type="evidence" value="ECO:0007669"/>
    <property type="project" value="UniProtKB-KW"/>
</dbReference>
<dbReference type="GO" id="GO:0140114">
    <property type="term" value="P:cellular detoxification of fluoride"/>
    <property type="evidence" value="ECO:0007669"/>
    <property type="project" value="UniProtKB-UniRule"/>
</dbReference>
<dbReference type="HAMAP" id="MF_00454">
    <property type="entry name" value="FluC"/>
    <property type="match status" value="1"/>
</dbReference>
<dbReference type="InterPro" id="IPR003691">
    <property type="entry name" value="FluC"/>
</dbReference>
<dbReference type="NCBIfam" id="TIGR00494">
    <property type="entry name" value="crcB"/>
    <property type="match status" value="1"/>
</dbReference>
<dbReference type="PANTHER" id="PTHR28259">
    <property type="entry name" value="FLUORIDE EXPORT PROTEIN 1-RELATED"/>
    <property type="match status" value="1"/>
</dbReference>
<dbReference type="PANTHER" id="PTHR28259:SF1">
    <property type="entry name" value="FLUORIDE EXPORT PROTEIN 1-RELATED"/>
    <property type="match status" value="1"/>
</dbReference>
<dbReference type="Pfam" id="PF02537">
    <property type="entry name" value="CRCB"/>
    <property type="match status" value="1"/>
</dbReference>
<name>FLUC2_DEIGD</name>
<proteinExistence type="inferred from homology"/>
<geneLocation type="plasmid">
    <name>pDGEO01</name>
</geneLocation>
<organism>
    <name type="scientific">Deinococcus geothermalis (strain DSM 11300 / CIP 105573 / AG-3a)</name>
    <dbReference type="NCBI Taxonomy" id="319795"/>
    <lineage>
        <taxon>Bacteria</taxon>
        <taxon>Thermotogati</taxon>
        <taxon>Deinococcota</taxon>
        <taxon>Deinococci</taxon>
        <taxon>Deinococcales</taxon>
        <taxon>Deinococcaceae</taxon>
        <taxon>Deinococcus</taxon>
    </lineage>
</organism>
<accession>Q1J3F4</accession>
<keyword id="KW-1003">Cell membrane</keyword>
<keyword id="KW-0407">Ion channel</keyword>
<keyword id="KW-0406">Ion transport</keyword>
<keyword id="KW-0472">Membrane</keyword>
<keyword id="KW-0479">Metal-binding</keyword>
<keyword id="KW-0614">Plasmid</keyword>
<keyword id="KW-0915">Sodium</keyword>
<keyword id="KW-0812">Transmembrane</keyword>
<keyword id="KW-1133">Transmembrane helix</keyword>
<keyword id="KW-0813">Transport</keyword>
<evidence type="ECO:0000255" key="1">
    <source>
        <dbReference type="HAMAP-Rule" id="MF_00454"/>
    </source>
</evidence>
<comment type="function">
    <text evidence="1">Fluoride-specific ion channel. Important for reducing fluoride concentration in the cell, thus reducing its toxicity.</text>
</comment>
<comment type="catalytic activity">
    <reaction evidence="1">
        <text>fluoride(in) = fluoride(out)</text>
        <dbReference type="Rhea" id="RHEA:76159"/>
        <dbReference type="ChEBI" id="CHEBI:17051"/>
    </reaction>
    <physiologicalReaction direction="left-to-right" evidence="1">
        <dbReference type="Rhea" id="RHEA:76160"/>
    </physiologicalReaction>
</comment>
<comment type="activity regulation">
    <text evidence="1">Na(+) is not transported, but it plays an essential structural role and its presence is essential for fluoride channel function.</text>
</comment>
<comment type="subcellular location">
    <subcellularLocation>
        <location evidence="1">Cell membrane</location>
        <topology evidence="1">Multi-pass membrane protein</topology>
    </subcellularLocation>
</comment>
<comment type="similarity">
    <text evidence="1">Belongs to the fluoride channel Fluc/FEX (TC 1.A.43) family.</text>
</comment>
<protein>
    <recommendedName>
        <fullName evidence="1">Fluoride-specific ion channel FluC 2</fullName>
    </recommendedName>
</protein>